<keyword id="KW-0007">Acetylation</keyword>
<keyword id="KW-0010">Activator</keyword>
<keyword id="KW-0103">Bromodomain</keyword>
<keyword id="KW-0156">Chromatin regulator</keyword>
<keyword id="KW-0158">Chromosome</keyword>
<keyword id="KW-0963">Cytoplasm</keyword>
<keyword id="KW-0238">DNA-binding</keyword>
<keyword id="KW-0479">Metal-binding</keyword>
<keyword id="KW-0539">Nucleus</keyword>
<keyword id="KW-0597">Phosphoprotein</keyword>
<keyword id="KW-1185">Reference proteome</keyword>
<keyword id="KW-0677">Repeat</keyword>
<keyword id="KW-0804">Transcription</keyword>
<keyword id="KW-0805">Transcription regulation</keyword>
<keyword id="KW-0862">Zinc</keyword>
<keyword id="KW-0863">Zinc-finger</keyword>
<evidence type="ECO:0000250" key="1">
    <source>
        <dbReference type="UniProtKB" id="P55201"/>
    </source>
</evidence>
<evidence type="ECO:0000255" key="2">
    <source>
        <dbReference type="PROSITE-ProRule" id="PRU00035"/>
    </source>
</evidence>
<evidence type="ECO:0000255" key="3">
    <source>
        <dbReference type="PROSITE-ProRule" id="PRU00042"/>
    </source>
</evidence>
<evidence type="ECO:0000255" key="4">
    <source>
        <dbReference type="PROSITE-ProRule" id="PRU00146"/>
    </source>
</evidence>
<evidence type="ECO:0000255" key="5">
    <source>
        <dbReference type="PROSITE-ProRule" id="PRU00162"/>
    </source>
</evidence>
<evidence type="ECO:0000255" key="6">
    <source>
        <dbReference type="PROSITE-ProRule" id="PRU01146"/>
    </source>
</evidence>
<evidence type="ECO:0000256" key="7">
    <source>
        <dbReference type="SAM" id="MobiDB-lite"/>
    </source>
</evidence>
<evidence type="ECO:0000269" key="8">
    <source>
    </source>
</evidence>
<evidence type="ECO:0000269" key="9">
    <source>
    </source>
</evidence>
<evidence type="ECO:0000269" key="10">
    <source>
    </source>
</evidence>
<evidence type="ECO:0000305" key="11"/>
<evidence type="ECO:0000312" key="12">
    <source>
        <dbReference type="MGI" id="MGI:1926033"/>
    </source>
</evidence>
<evidence type="ECO:0007744" key="13">
    <source>
    </source>
</evidence>
<evidence type="ECO:0007744" key="14">
    <source>
    </source>
</evidence>
<dbReference type="EMBL" id="AC155287">
    <property type="status" value="NOT_ANNOTATED_CDS"/>
    <property type="molecule type" value="Genomic_DNA"/>
</dbReference>
<dbReference type="EMBL" id="CH466523">
    <property type="protein sequence ID" value="EDK99448.1"/>
    <property type="molecule type" value="Genomic_DNA"/>
</dbReference>
<dbReference type="EMBL" id="BC138361">
    <property type="protein sequence ID" value="AAI38362.1"/>
    <property type="molecule type" value="mRNA"/>
</dbReference>
<dbReference type="CCDS" id="CCDS71810.1"/>
<dbReference type="RefSeq" id="NP_001269056.1">
    <property type="nucleotide sequence ID" value="NM_001282127.1"/>
</dbReference>
<dbReference type="RefSeq" id="XP_006506851.1">
    <property type="nucleotide sequence ID" value="XM_006506788.4"/>
</dbReference>
<dbReference type="SMR" id="B2RRD7"/>
<dbReference type="FunCoup" id="B2RRD7">
    <property type="interactions" value="3976"/>
</dbReference>
<dbReference type="IntAct" id="B2RRD7">
    <property type="interactions" value="2"/>
</dbReference>
<dbReference type="STRING" id="10090.ENSMUSP00000108744"/>
<dbReference type="iPTMnet" id="B2RRD7"/>
<dbReference type="PhosphoSitePlus" id="B2RRD7"/>
<dbReference type="jPOST" id="B2RRD7"/>
<dbReference type="PaxDb" id="10090-ENSMUSP00000108744"/>
<dbReference type="PeptideAtlas" id="B2RRD7"/>
<dbReference type="ProteomicsDB" id="273706"/>
<dbReference type="Pumba" id="B2RRD7"/>
<dbReference type="Antibodypedia" id="933">
    <property type="antibodies" value="59 antibodies from 17 providers"/>
</dbReference>
<dbReference type="DNASU" id="78783"/>
<dbReference type="Ensembl" id="ENSMUST00000113122.8">
    <property type="protein sequence ID" value="ENSMUSP00000108747.2"/>
    <property type="gene ID" value="ENSMUSG00000001632.17"/>
</dbReference>
<dbReference type="GeneID" id="78783"/>
<dbReference type="KEGG" id="mmu:78783"/>
<dbReference type="UCSC" id="uc009dfb.1">
    <property type="organism name" value="mouse"/>
</dbReference>
<dbReference type="AGR" id="MGI:1926033"/>
<dbReference type="CTD" id="7862"/>
<dbReference type="MGI" id="MGI:1926033">
    <property type="gene designation" value="Brpf1"/>
</dbReference>
<dbReference type="VEuPathDB" id="HostDB:ENSMUSG00000001632"/>
<dbReference type="eggNOG" id="KOG0955">
    <property type="taxonomic scope" value="Eukaryota"/>
</dbReference>
<dbReference type="GeneTree" id="ENSGT00940000157794"/>
<dbReference type="HOGENOM" id="CLU_003589_1_0_1"/>
<dbReference type="InParanoid" id="B2RRD7"/>
<dbReference type="OrthoDB" id="20839at2759"/>
<dbReference type="Reactome" id="R-MMU-3214847">
    <property type="pathway name" value="HATs acetylate histones"/>
</dbReference>
<dbReference type="Reactome" id="R-MMU-6804758">
    <property type="pathway name" value="Regulation of TP53 Activity through Acetylation"/>
</dbReference>
<dbReference type="BioGRID-ORCS" id="78783">
    <property type="hits" value="14 hits in 85 CRISPR screens"/>
</dbReference>
<dbReference type="ChiTaRS" id="Brpf1">
    <property type="organism name" value="mouse"/>
</dbReference>
<dbReference type="PRO" id="PR:B2RRD7"/>
<dbReference type="Proteomes" id="UP000000589">
    <property type="component" value="Chromosome 6"/>
</dbReference>
<dbReference type="RNAct" id="B2RRD7">
    <property type="molecule type" value="protein"/>
</dbReference>
<dbReference type="Bgee" id="ENSMUSG00000001632">
    <property type="expression patterns" value="Expressed in humerus cartilage element and 262 other cell types or tissues"/>
</dbReference>
<dbReference type="ExpressionAtlas" id="B2RRD7">
    <property type="expression patterns" value="baseline and differential"/>
</dbReference>
<dbReference type="GO" id="GO:0005737">
    <property type="term" value="C:cytoplasm"/>
    <property type="evidence" value="ECO:0000250"/>
    <property type="project" value="UniProtKB"/>
</dbReference>
<dbReference type="GO" id="GO:0000123">
    <property type="term" value="C:histone acetyltransferase complex"/>
    <property type="evidence" value="ECO:0000250"/>
    <property type="project" value="UniProtKB"/>
</dbReference>
<dbReference type="GO" id="GO:0070776">
    <property type="term" value="C:MOZ/MORF histone acetyltransferase complex"/>
    <property type="evidence" value="ECO:0000250"/>
    <property type="project" value="UniProtKB"/>
</dbReference>
<dbReference type="GO" id="GO:0005634">
    <property type="term" value="C:nucleus"/>
    <property type="evidence" value="ECO:0000250"/>
    <property type="project" value="UniProtKB"/>
</dbReference>
<dbReference type="GO" id="GO:0010698">
    <property type="term" value="F:acetyltransferase activator activity"/>
    <property type="evidence" value="ECO:0000250"/>
    <property type="project" value="UniProtKB"/>
</dbReference>
<dbReference type="GO" id="GO:0003677">
    <property type="term" value="F:DNA binding"/>
    <property type="evidence" value="ECO:0007669"/>
    <property type="project" value="UniProtKB-KW"/>
</dbReference>
<dbReference type="GO" id="GO:0008270">
    <property type="term" value="F:zinc ion binding"/>
    <property type="evidence" value="ECO:0007669"/>
    <property type="project" value="UniProtKB-KW"/>
</dbReference>
<dbReference type="GO" id="GO:0006338">
    <property type="term" value="P:chromatin remodeling"/>
    <property type="evidence" value="ECO:0000315"/>
    <property type="project" value="UniProtKB"/>
</dbReference>
<dbReference type="GO" id="GO:0035726">
    <property type="term" value="P:common myeloid progenitor cell proliferation"/>
    <property type="evidence" value="ECO:0000315"/>
    <property type="project" value="MGI"/>
</dbReference>
<dbReference type="GO" id="GO:0001841">
    <property type="term" value="P:neural tube formation"/>
    <property type="evidence" value="ECO:0000315"/>
    <property type="project" value="MGI"/>
</dbReference>
<dbReference type="GO" id="GO:0048145">
    <property type="term" value="P:regulation of fibroblast proliferation"/>
    <property type="evidence" value="ECO:0000315"/>
    <property type="project" value="MGI"/>
</dbReference>
<dbReference type="GO" id="GO:0001570">
    <property type="term" value="P:vasculogenesis"/>
    <property type="evidence" value="ECO:0000315"/>
    <property type="project" value="MGI"/>
</dbReference>
<dbReference type="CDD" id="cd05512">
    <property type="entry name" value="Bromo_brd1_like"/>
    <property type="match status" value="1"/>
</dbReference>
<dbReference type="CDD" id="cd15701">
    <property type="entry name" value="ePHD_BRPF1"/>
    <property type="match status" value="1"/>
</dbReference>
<dbReference type="CDD" id="cd15676">
    <property type="entry name" value="PHD_BRPF1"/>
    <property type="match status" value="1"/>
</dbReference>
<dbReference type="CDD" id="cd20156">
    <property type="entry name" value="PWWP_BRPF1"/>
    <property type="match status" value="1"/>
</dbReference>
<dbReference type="FunFam" id="3.30.40.10:FF:000008">
    <property type="entry name" value="Bromodomain containing 1, isoform CRA_a"/>
    <property type="match status" value="1"/>
</dbReference>
<dbReference type="FunFam" id="2.30.30.140:FF:000008">
    <property type="entry name" value="Bromodomain containing 1, isoform CRA_b"/>
    <property type="match status" value="1"/>
</dbReference>
<dbReference type="FunFam" id="3.30.40.10:FF:000007">
    <property type="entry name" value="Bromodomain containing 1, isoform CRA_b"/>
    <property type="match status" value="1"/>
</dbReference>
<dbReference type="FunFam" id="1.20.920.10:FF:000007">
    <property type="entry name" value="Bromodomain-containing protein 1"/>
    <property type="match status" value="1"/>
</dbReference>
<dbReference type="Gene3D" id="2.30.30.140">
    <property type="match status" value="1"/>
</dbReference>
<dbReference type="Gene3D" id="1.20.920.10">
    <property type="entry name" value="Bromodomain-like"/>
    <property type="match status" value="1"/>
</dbReference>
<dbReference type="Gene3D" id="3.30.40.10">
    <property type="entry name" value="Zinc/RING finger domain, C3HC4 (zinc finger)"/>
    <property type="match status" value="2"/>
</dbReference>
<dbReference type="InterPro" id="IPR001487">
    <property type="entry name" value="Bromodomain"/>
</dbReference>
<dbReference type="InterPro" id="IPR036427">
    <property type="entry name" value="Bromodomain-like_sf"/>
</dbReference>
<dbReference type="InterPro" id="IPR018359">
    <property type="entry name" value="Bromodomain_CS"/>
</dbReference>
<dbReference type="InterPro" id="IPR042008">
    <property type="entry name" value="BRPF1_PHD"/>
</dbReference>
<dbReference type="InterPro" id="IPR049583">
    <property type="entry name" value="BRPF1_PWWP"/>
</dbReference>
<dbReference type="InterPro" id="IPR019542">
    <property type="entry name" value="Enhancer_polycomb-like_N"/>
</dbReference>
<dbReference type="InterPro" id="IPR034732">
    <property type="entry name" value="EPHD"/>
</dbReference>
<dbReference type="InterPro" id="IPR050701">
    <property type="entry name" value="Histone_Mod_Regulator"/>
</dbReference>
<dbReference type="InterPro" id="IPR042061">
    <property type="entry name" value="Peregrin_ePHD"/>
</dbReference>
<dbReference type="InterPro" id="IPR000313">
    <property type="entry name" value="PWWP_dom"/>
</dbReference>
<dbReference type="InterPro" id="IPR019786">
    <property type="entry name" value="Zinc_finger_PHD-type_CS"/>
</dbReference>
<dbReference type="InterPro" id="IPR013087">
    <property type="entry name" value="Znf_C2H2_type"/>
</dbReference>
<dbReference type="InterPro" id="IPR011011">
    <property type="entry name" value="Znf_FYVE_PHD"/>
</dbReference>
<dbReference type="InterPro" id="IPR001965">
    <property type="entry name" value="Znf_PHD"/>
</dbReference>
<dbReference type="InterPro" id="IPR019787">
    <property type="entry name" value="Znf_PHD-finger"/>
</dbReference>
<dbReference type="InterPro" id="IPR013083">
    <property type="entry name" value="Znf_RING/FYVE/PHD"/>
</dbReference>
<dbReference type="PANTHER" id="PTHR13793:SF85">
    <property type="entry name" value="PEREGRIN"/>
    <property type="match status" value="1"/>
</dbReference>
<dbReference type="PANTHER" id="PTHR13793">
    <property type="entry name" value="PHD FINGER PROTEINS"/>
    <property type="match status" value="1"/>
</dbReference>
<dbReference type="Pfam" id="PF00439">
    <property type="entry name" value="Bromodomain"/>
    <property type="match status" value="1"/>
</dbReference>
<dbReference type="Pfam" id="PF10513">
    <property type="entry name" value="EPL1"/>
    <property type="match status" value="1"/>
</dbReference>
<dbReference type="Pfam" id="PF13831">
    <property type="entry name" value="PHD_2"/>
    <property type="match status" value="1"/>
</dbReference>
<dbReference type="Pfam" id="PF00855">
    <property type="entry name" value="PWWP"/>
    <property type="match status" value="1"/>
</dbReference>
<dbReference type="Pfam" id="PF13832">
    <property type="entry name" value="zf-HC5HC2H_2"/>
    <property type="match status" value="1"/>
</dbReference>
<dbReference type="PRINTS" id="PR00503">
    <property type="entry name" value="BROMODOMAIN"/>
</dbReference>
<dbReference type="SMART" id="SM00297">
    <property type="entry name" value="BROMO"/>
    <property type="match status" value="1"/>
</dbReference>
<dbReference type="SMART" id="SM00249">
    <property type="entry name" value="PHD"/>
    <property type="match status" value="2"/>
</dbReference>
<dbReference type="SMART" id="SM00293">
    <property type="entry name" value="PWWP"/>
    <property type="match status" value="1"/>
</dbReference>
<dbReference type="SUPFAM" id="SSF47370">
    <property type="entry name" value="Bromodomain"/>
    <property type="match status" value="1"/>
</dbReference>
<dbReference type="SUPFAM" id="SSF57903">
    <property type="entry name" value="FYVE/PHD zinc finger"/>
    <property type="match status" value="1"/>
</dbReference>
<dbReference type="SUPFAM" id="SSF63748">
    <property type="entry name" value="Tudor/PWWP/MBT"/>
    <property type="match status" value="1"/>
</dbReference>
<dbReference type="PROSITE" id="PS00633">
    <property type="entry name" value="BROMODOMAIN_1"/>
    <property type="match status" value="1"/>
</dbReference>
<dbReference type="PROSITE" id="PS50014">
    <property type="entry name" value="BROMODOMAIN_2"/>
    <property type="match status" value="1"/>
</dbReference>
<dbReference type="PROSITE" id="PS51805">
    <property type="entry name" value="EPHD"/>
    <property type="match status" value="1"/>
</dbReference>
<dbReference type="PROSITE" id="PS50812">
    <property type="entry name" value="PWWP"/>
    <property type="match status" value="1"/>
</dbReference>
<dbReference type="PROSITE" id="PS01359">
    <property type="entry name" value="ZF_PHD_1"/>
    <property type="match status" value="1"/>
</dbReference>
<dbReference type="PROSITE" id="PS50016">
    <property type="entry name" value="ZF_PHD_2"/>
    <property type="match status" value="1"/>
</dbReference>
<dbReference type="PROSITE" id="PS00028">
    <property type="entry name" value="ZINC_FINGER_C2H2_1"/>
    <property type="match status" value="1"/>
</dbReference>
<dbReference type="PROSITE" id="PS50157">
    <property type="entry name" value="ZINC_FINGER_C2H2_2"/>
    <property type="match status" value="1"/>
</dbReference>
<protein>
    <recommendedName>
        <fullName evidence="11">Peregrin</fullName>
    </recommendedName>
    <alternativeName>
        <fullName evidence="12">Bromodomain and PHD finger-containing protein 1</fullName>
    </alternativeName>
</protein>
<gene>
    <name evidence="12" type="primary">Brpf1</name>
</gene>
<comment type="function">
    <text evidence="1 10">Scaffold subunit of various histone acetyltransferase (HAT) complexes, such as the MOZ/MORF and HBO1 complexes, which have a histone H3 acetyltransferase activity (By similarity). Plays a key role in HBO1 complex by directing KAT7/HBO1 specificity towards histone H3 'Lys-14' acetylation (H3K14ac) (By similarity). Some HAT complexes preferentially mediate histone H3 'Lys-23' (H3K23ac) acetylation (PubMed:27939640). Positively regulates the transcription of RUNX1 and RUNX2 (By similarity).</text>
</comment>
<comment type="subunit">
    <text evidence="1">Component of some HBO1 complex composed of KAT7/HBO1, MEAF6, ING5, and BRPF1. Component of the MOZ/MORF complex composed at least of ING5, KAT6A, KAT6B, MEAF6 and one of BRPF1, BRD1/BRPF2 and BRPF3. Interacts (via PHD-type zinc finger domains) with unmethylated histone H3 at 'Lys-4' (H3K4me0). Interacts with trimethylated 'Lys-36' of histone H3 (H3K36me3). Interacts with ING5; interaction directs BRPF1 to H4K4me3-enriched chromatin at the 5' of active genes. Interacts with KAT7.</text>
</comment>
<comment type="subcellular location">
    <subcellularLocation>
        <location evidence="1">Nucleus</location>
    </subcellularLocation>
    <subcellularLocation>
        <location evidence="1">Chromosome</location>
    </subcellularLocation>
    <subcellularLocation>
        <location evidence="1">Cytoplasm</location>
    </subcellularLocation>
    <text evidence="1">Localization to the nucleus depends on KAT6A, ING5 and MEAF6. Localizes to transcription start sites.</text>
</comment>
<comment type="tissue specificity">
    <text evidence="8">Expressed at low level in most tissues, with high expression in the testis and specific regions of the brain.</text>
</comment>
<comment type="developmental stage">
    <text evidence="8">Expressed in the placenta, yolk sac, limb buds, brain, spinal cord, retina, nose, bone and brown fat at the prenatal stages.</text>
</comment>
<comment type="PTM">
    <text evidence="1">Acetylated by KAT6A.</text>
</comment>
<comment type="disruption phenotype">
    <text evidence="8 9">Embryonic lethality around embryonic day 9.5 caused by arrested vasculogenesis in the yolk sac and embryo proper (PubMed:24646517, PubMed:25773539). Embryos also display abnormal neural tube closure (PubMed:25773539).</text>
</comment>
<accession>B2RRD7</accession>
<proteinExistence type="evidence at protein level"/>
<reference key="1">
    <citation type="journal article" date="2009" name="PLoS Biol.">
        <title>Lineage-specific biology revealed by a finished genome assembly of the mouse.</title>
        <authorList>
            <person name="Church D.M."/>
            <person name="Goodstadt L."/>
            <person name="Hillier L.W."/>
            <person name="Zody M.C."/>
            <person name="Goldstein S."/>
            <person name="She X."/>
            <person name="Bult C.J."/>
            <person name="Agarwala R."/>
            <person name="Cherry J.L."/>
            <person name="DiCuccio M."/>
            <person name="Hlavina W."/>
            <person name="Kapustin Y."/>
            <person name="Meric P."/>
            <person name="Maglott D."/>
            <person name="Birtle Z."/>
            <person name="Marques A.C."/>
            <person name="Graves T."/>
            <person name="Zhou S."/>
            <person name="Teague B."/>
            <person name="Potamousis K."/>
            <person name="Churas C."/>
            <person name="Place M."/>
            <person name="Herschleb J."/>
            <person name="Runnheim R."/>
            <person name="Forrest D."/>
            <person name="Amos-Landgraf J."/>
            <person name="Schwartz D.C."/>
            <person name="Cheng Z."/>
            <person name="Lindblad-Toh K."/>
            <person name="Eichler E.E."/>
            <person name="Ponting C.P."/>
        </authorList>
    </citation>
    <scope>NUCLEOTIDE SEQUENCE [LARGE SCALE GENOMIC DNA]</scope>
    <source>
        <strain>C57BL/6J</strain>
    </source>
</reference>
<reference key="2">
    <citation type="submission" date="2005-07" db="EMBL/GenBank/DDBJ databases">
        <authorList>
            <person name="Mural R.J."/>
            <person name="Adams M.D."/>
            <person name="Myers E.W."/>
            <person name="Smith H.O."/>
            <person name="Venter J.C."/>
        </authorList>
    </citation>
    <scope>NUCLEOTIDE SEQUENCE [LARGE SCALE GENOMIC DNA]</scope>
</reference>
<reference key="3">
    <citation type="journal article" date="2004" name="Genome Res.">
        <title>The status, quality, and expansion of the NIH full-length cDNA project: the Mammalian Gene Collection (MGC).</title>
        <authorList>
            <consortium name="The MGC Project Team"/>
        </authorList>
    </citation>
    <scope>NUCLEOTIDE SEQUENCE [LARGE SCALE MRNA]</scope>
    <source>
        <tissue>Brain</tissue>
    </source>
</reference>
<reference key="4">
    <citation type="journal article" date="2010" name="Cell">
        <title>A tissue-specific atlas of mouse protein phosphorylation and expression.</title>
        <authorList>
            <person name="Huttlin E.L."/>
            <person name="Jedrychowski M.P."/>
            <person name="Elias J.E."/>
            <person name="Goswami T."/>
            <person name="Rad R."/>
            <person name="Beausoleil S.A."/>
            <person name="Villen J."/>
            <person name="Haas W."/>
            <person name="Sowa M.E."/>
            <person name="Gygi S.P."/>
        </authorList>
    </citation>
    <scope>PHOSPHORYLATION [LARGE SCALE ANALYSIS] AT SER-120; SER-459; SER-461; THR-856; SER-858; SER-915; SER-920 AND SER-924</scope>
    <scope>IDENTIFICATION BY MASS SPECTROMETRY [LARGE SCALE ANALYSIS]</scope>
    <source>
        <tissue>Kidney</tissue>
        <tissue>Lung</tissue>
        <tissue>Spleen</tissue>
        <tissue>Testis</tissue>
    </source>
</reference>
<reference key="5">
    <citation type="journal article" date="2013" name="Mol. Cell">
        <title>SIRT5-mediated lysine desuccinylation impacts diverse metabolic pathways.</title>
        <authorList>
            <person name="Park J."/>
            <person name="Chen Y."/>
            <person name="Tishkoff D.X."/>
            <person name="Peng C."/>
            <person name="Tan M."/>
            <person name="Dai L."/>
            <person name="Xie Z."/>
            <person name="Zhang Y."/>
            <person name="Zwaans B.M."/>
            <person name="Skinner M.E."/>
            <person name="Lombard D.B."/>
            <person name="Zhao Y."/>
        </authorList>
    </citation>
    <scope>ACETYLATION [LARGE SCALE ANALYSIS] AT LYS-147 AND LYS-579</scope>
    <scope>IDENTIFICATION BY MASS SPECTROMETRY [LARGE SCALE ANALYSIS]</scope>
    <source>
        <tissue>Embryonic fibroblast</tissue>
    </source>
</reference>
<reference key="6">
    <citation type="journal article" date="2014" name="Epigenetics">
        <title>Expression atlas of the multivalent epigenetic regulator Brpf1 and its requirement for survival of mouse embryos.</title>
        <authorList>
            <person name="You L."/>
            <person name="Chen L."/>
            <person name="Penney J."/>
            <person name="Miao D."/>
            <person name="Yang X.J."/>
        </authorList>
    </citation>
    <scope>TISSUE SPECIFICITY</scope>
    <scope>DISRUPTION PHENOTYPE</scope>
</reference>
<reference key="7">
    <citation type="journal article" date="2015" name="J. Biol. Chem.">
        <title>The chromatin regulator Brpf1 regulates embryo development and cell proliferation.</title>
        <authorList>
            <person name="You L."/>
            <person name="Yan K."/>
            <person name="Zou J."/>
            <person name="Zhao H."/>
            <person name="Bertos N.R."/>
            <person name="Park M."/>
            <person name="Wang E."/>
            <person name="Yang X.J."/>
        </authorList>
    </citation>
    <scope>DISRUPTION PHENOTYPE</scope>
</reference>
<reference key="8">
    <citation type="journal article" date="2017" name="Am. J. Hum. Genet.">
        <title>Mutations in the chromatin regulator gene BRPF1 cause syndromic intellectual disability and deficient histone acetylation.</title>
        <authorList>
            <consortium name="DDD Study"/>
            <consortium name="CAUSES Study"/>
            <person name="Yan K."/>
            <person name="Rousseau J."/>
            <person name="Littlejohn R.O."/>
            <person name="Kiss C."/>
            <person name="Lehman A."/>
            <person name="Rosenfeld J.A."/>
            <person name="Stumpel C.T."/>
            <person name="Stegmann A.P."/>
            <person name="Robak L."/>
            <person name="Scaglia F."/>
            <person name="Nguyen T.T."/>
            <person name="Fu H."/>
            <person name="Ajeawung N.F."/>
            <person name="Camurri M.V."/>
            <person name="Li L."/>
            <person name="Gardham A."/>
            <person name="Panis B."/>
            <person name="Almannai M."/>
            <person name="Sacoto M.J."/>
            <person name="Baskin B."/>
            <person name="Ruivenkamp C."/>
            <person name="Xia F."/>
            <person name="Bi W."/>
            <person name="Cho M.T."/>
            <person name="Potjer T.P."/>
            <person name="Santen G.W."/>
            <person name="Parker M.J."/>
            <person name="Canham N."/>
            <person name="McKinnon M."/>
            <person name="Potocki L."/>
            <person name="MacKenzie J.J."/>
            <person name="Roeder E.R."/>
            <person name="Campeau P.M."/>
            <person name="Yang X.J."/>
        </authorList>
    </citation>
    <scope>FUNCTION</scope>
</reference>
<name>BRPF1_MOUSE</name>
<feature type="chain" id="PRO_0000439813" description="Peregrin">
    <location>
        <begin position="1"/>
        <end position="1212"/>
    </location>
</feature>
<feature type="domain" description="Bromo" evidence="2">
    <location>
        <begin position="627"/>
        <end position="731"/>
    </location>
</feature>
<feature type="domain" description="PWWP" evidence="5">
    <location>
        <begin position="1083"/>
        <end position="1166"/>
    </location>
</feature>
<feature type="zinc finger region" description="C2H2-type" evidence="3">
    <location>
        <begin position="21"/>
        <end position="47"/>
    </location>
</feature>
<feature type="zinc finger region" description="PHD-type 1" evidence="4">
    <location>
        <begin position="272"/>
        <end position="322"/>
    </location>
</feature>
<feature type="zinc finger region" description="C2HC pre-PHD-type" evidence="6">
    <location>
        <begin position="326"/>
        <end position="359"/>
    </location>
</feature>
<feature type="zinc finger region" description="PHD-type 2" evidence="6">
    <location>
        <begin position="383"/>
        <end position="447"/>
    </location>
</feature>
<feature type="region of interest" description="Disordered" evidence="7">
    <location>
        <begin position="43"/>
        <end position="87"/>
    </location>
</feature>
<feature type="region of interest" description="Interaction with KAT6A and KAT6B" evidence="1">
    <location>
        <begin position="59"/>
        <end position="221"/>
    </location>
</feature>
<feature type="region of interest" description="Disordered" evidence="7">
    <location>
        <begin position="118"/>
        <end position="176"/>
    </location>
</feature>
<feature type="region of interest" description="Disordered" evidence="7">
    <location>
        <begin position="447"/>
        <end position="489"/>
    </location>
</feature>
<feature type="region of interest" description="Interaction with MEAF6 and ING5" evidence="1">
    <location>
        <begin position="500"/>
        <end position="819"/>
    </location>
</feature>
<feature type="region of interest" description="Required for RUNX1 and RUNX2 transcriptional activation" evidence="1">
    <location>
        <begin position="542"/>
        <end position="1077"/>
    </location>
</feature>
<feature type="region of interest" description="Disordered" evidence="7">
    <location>
        <begin position="817"/>
        <end position="1060"/>
    </location>
</feature>
<feature type="compositionally biased region" description="Basic residues" evidence="7">
    <location>
        <begin position="58"/>
        <end position="67"/>
    </location>
</feature>
<feature type="compositionally biased region" description="Low complexity" evidence="7">
    <location>
        <begin position="74"/>
        <end position="85"/>
    </location>
</feature>
<feature type="compositionally biased region" description="Acidic residues" evidence="7">
    <location>
        <begin position="119"/>
        <end position="130"/>
    </location>
</feature>
<feature type="compositionally biased region" description="Basic residues" evidence="7">
    <location>
        <begin position="148"/>
        <end position="166"/>
    </location>
</feature>
<feature type="compositionally biased region" description="Acidic residues" evidence="7">
    <location>
        <begin position="463"/>
        <end position="473"/>
    </location>
</feature>
<feature type="compositionally biased region" description="Basic and acidic residues" evidence="7">
    <location>
        <begin position="823"/>
        <end position="836"/>
    </location>
</feature>
<feature type="compositionally biased region" description="Low complexity" evidence="7">
    <location>
        <begin position="856"/>
        <end position="869"/>
    </location>
</feature>
<feature type="compositionally biased region" description="Low complexity" evidence="7">
    <location>
        <begin position="993"/>
        <end position="1019"/>
    </location>
</feature>
<feature type="modified residue" description="Phosphoserine" evidence="13">
    <location>
        <position position="120"/>
    </location>
</feature>
<feature type="modified residue" description="N6-acetyllysine" evidence="14">
    <location>
        <position position="147"/>
    </location>
</feature>
<feature type="modified residue" description="Phosphoserine" evidence="1">
    <location>
        <position position="237"/>
    </location>
</feature>
<feature type="modified residue" description="Phosphoserine" evidence="13">
    <location>
        <position position="459"/>
    </location>
</feature>
<feature type="modified residue" description="Phosphoserine" evidence="13">
    <location>
        <position position="461"/>
    </location>
</feature>
<feature type="modified residue" description="N6-acetyllysine" evidence="14">
    <location>
        <position position="579"/>
    </location>
</feature>
<feature type="modified residue" description="Phosphothreonine" evidence="13">
    <location>
        <position position="856"/>
    </location>
</feature>
<feature type="modified residue" description="Phosphoserine" evidence="13">
    <location>
        <position position="858"/>
    </location>
</feature>
<feature type="modified residue" description="Phosphoserine" evidence="13">
    <location>
        <position position="915"/>
    </location>
</feature>
<feature type="modified residue" description="Phosphoserine" evidence="13">
    <location>
        <position position="920"/>
    </location>
</feature>
<feature type="modified residue" description="Phosphoserine" evidence="13">
    <location>
        <position position="924"/>
    </location>
</feature>
<feature type="modified residue" description="Phosphoserine" evidence="1">
    <location>
        <position position="1074"/>
    </location>
</feature>
<feature type="modified residue" description="Phosphoserine" evidence="1">
    <location>
        <position position="1185"/>
    </location>
</feature>
<sequence length="1212" mass="137310">MGVDFDVKTFCHNLRATKPPYECPVETCRKVYKSYSGIEYHLYHYDHDSPPPPQQTPLRKHKKKGRQSRPANKQSPSPSEVSQSPGREVMSYAQAQRMVEVDLHGRVHRISIFDNLDVVSEDEEAPEEAPENGSNKENTETPAATPKSGKHKNKEKRKDSNHHHHSAPASAAPKLPEVVYRELEQDTPDAPPRPTSYYRYIEKSAEELDEEVEYDMDEEDYIWLDIMNERRKTEGVSPIPQEIFEYLMDRLEKESYFESHNKGDPNALVDEDAVCCICNDGECQNSNVILFCDMCNLAVHQECYGVPYIPEGQWLCRRCLQSPSRAVDCALCPNKGGAFKQTDDGRWAHVVCALWIPEVCFANTVFLEPIDSIEHIPPARWKLTCYICKQRGSGACIQCHKANCYTAFHVTCAQQAGLYMKMEPVRETGANGTSFSVRKTAYCDIHTPPGSARRLPALSHSEGEEEEDEEEDEGKSWSSEKVKKAKAKSRIKMKKARKILAEKRAAAPVVSVPCIPPHRLSKITNRLTIQRKSQFMQRLHSYWTLKRQSRNGVPLLRRLQTHLQSQRNCEQVGRDSDDKNWALKEQLKSWQRLRHDLERARLLVELIRKREKLKRETIKIQQIAMEMQLTPFLILLRKTLEQLQEKDTGNIFSEPVPLSEVPDYLDHIKKPMDFFTMKQNLEAYRYLNFDDFEEDFNLIVSNCLKYNAKDTIFYRAAVRLREQGGAVLRQARRQAEKMGIDFETGMHIPHNLAGDEVSHHTEDVEEERLVLLENQKHLPVEEQLKLLLERLDEVNASKQSVGRSRRAKMIKKEMTALRRKLAHQRETGRDGPERHGPSGRGNLTPHPAACDKDGQTDSAAEESSSQETSKGLGPNMSSTPAHEVGRRTSVLFSKKNPKTAGPPKRPGRPPKNRESQMTPSHGGSPVGPPQLPIMGSLRQRKRGRSPRPSSSSDSDSDKSTEDPPMDLPANGFSSGNQPVKKSFLVYRNDCNLPRSSSDSESSSSSSSSAASDRTSTTPSKQGRGKPSFSRGTFPEDSSEDTSGTENEAYSVGTGRGVGHSMVRKSLGRGAGWLSEDEDSPLDALDLVWAKCRGYPSYPALIIDPKMPREGMFHHGVPIPVPPLEVLKLGEQMTQEAREHLYLVLFFDNKRTWQWLPRTKLVPLGVNQDLDKEKMLEGRKSNIRKSVQIAYHRALQHRSKVQGEQSSETSDSD</sequence>
<organism>
    <name type="scientific">Mus musculus</name>
    <name type="common">Mouse</name>
    <dbReference type="NCBI Taxonomy" id="10090"/>
    <lineage>
        <taxon>Eukaryota</taxon>
        <taxon>Metazoa</taxon>
        <taxon>Chordata</taxon>
        <taxon>Craniata</taxon>
        <taxon>Vertebrata</taxon>
        <taxon>Euteleostomi</taxon>
        <taxon>Mammalia</taxon>
        <taxon>Eutheria</taxon>
        <taxon>Euarchontoglires</taxon>
        <taxon>Glires</taxon>
        <taxon>Rodentia</taxon>
        <taxon>Myomorpha</taxon>
        <taxon>Muroidea</taxon>
        <taxon>Muridae</taxon>
        <taxon>Murinae</taxon>
        <taxon>Mus</taxon>
        <taxon>Mus</taxon>
    </lineage>
</organism>